<comment type="function">
    <text evidence="1">PPIases accelerate the folding of proteins. It catalyzes the cis-trans isomerization of proline imidic peptide bonds in oligopeptides (By similarity).</text>
</comment>
<comment type="catalytic activity">
    <reaction>
        <text>[protein]-peptidylproline (omega=180) = [protein]-peptidylproline (omega=0)</text>
        <dbReference type="Rhea" id="RHEA:16237"/>
        <dbReference type="Rhea" id="RHEA-COMP:10747"/>
        <dbReference type="Rhea" id="RHEA-COMP:10748"/>
        <dbReference type="ChEBI" id="CHEBI:83833"/>
        <dbReference type="ChEBI" id="CHEBI:83834"/>
        <dbReference type="EC" id="5.2.1.8"/>
    </reaction>
</comment>
<comment type="subcellular location">
    <subcellularLocation>
        <location evidence="4 5">Plastid</location>
        <location evidence="4 5">Chloroplast thylakoid lumen</location>
    </subcellularLocation>
</comment>
<comment type="similarity">
    <text evidence="6">Belongs to the FKBP-type PPIase family.</text>
</comment>
<protein>
    <recommendedName>
        <fullName>Peptidyl-prolyl cis-trans isomerase FKBP16-3, chloroplastic</fullName>
        <shortName>PPIase FKBP16-3</shortName>
        <ecNumber>5.2.1.8</ecNumber>
    </recommendedName>
    <alternativeName>
        <fullName>FK506-binding protein 16-3</fullName>
        <shortName>AtFKBP16-3</shortName>
    </alternativeName>
    <alternativeName>
        <fullName>Immunophilin FKBP16-3</fullName>
    </alternativeName>
    <alternativeName>
        <fullName>Rotamase</fullName>
    </alternativeName>
</protein>
<dbReference type="EC" id="5.2.1.8"/>
<dbReference type="EMBL" id="AC002335">
    <property type="protein sequence ID" value="AAB64339.2"/>
    <property type="molecule type" value="Genomic_DNA"/>
</dbReference>
<dbReference type="EMBL" id="CP002685">
    <property type="protein sequence ID" value="AEC10290.1"/>
    <property type="molecule type" value="Genomic_DNA"/>
</dbReference>
<dbReference type="EMBL" id="AY056125">
    <property type="protein sequence ID" value="AAL07204.1"/>
    <property type="molecule type" value="mRNA"/>
</dbReference>
<dbReference type="EMBL" id="AY113988">
    <property type="protein sequence ID" value="AAM45036.1"/>
    <property type="molecule type" value="mRNA"/>
</dbReference>
<dbReference type="PIR" id="F84867">
    <property type="entry name" value="F84867"/>
</dbReference>
<dbReference type="RefSeq" id="NP_181884.1">
    <property type="nucleotide sequence ID" value="NM_129918.3"/>
</dbReference>
<dbReference type="SMR" id="O22870"/>
<dbReference type="BioGRID" id="4294">
    <property type="interactions" value="1"/>
</dbReference>
<dbReference type="FunCoup" id="O22870">
    <property type="interactions" value="1564"/>
</dbReference>
<dbReference type="IntAct" id="O22870">
    <property type="interactions" value="1"/>
</dbReference>
<dbReference type="STRING" id="3702.O22870"/>
<dbReference type="iPTMnet" id="O22870"/>
<dbReference type="MetOSite" id="O22870"/>
<dbReference type="PaxDb" id="3702-AT2G43560.1"/>
<dbReference type="EnsemblPlants" id="AT2G43560.1">
    <property type="protein sequence ID" value="AT2G43560.1"/>
    <property type="gene ID" value="AT2G43560"/>
</dbReference>
<dbReference type="GeneID" id="818958"/>
<dbReference type="Gramene" id="AT2G43560.1">
    <property type="protein sequence ID" value="AT2G43560.1"/>
    <property type="gene ID" value="AT2G43560"/>
</dbReference>
<dbReference type="KEGG" id="ath:AT2G43560"/>
<dbReference type="Araport" id="AT2G43560"/>
<dbReference type="TAIR" id="AT2G43560"/>
<dbReference type="eggNOG" id="KOG0552">
    <property type="taxonomic scope" value="Eukaryota"/>
</dbReference>
<dbReference type="HOGENOM" id="CLU_092197_0_1_1"/>
<dbReference type="InParanoid" id="O22870"/>
<dbReference type="PhylomeDB" id="O22870"/>
<dbReference type="PRO" id="PR:O22870"/>
<dbReference type="Proteomes" id="UP000006548">
    <property type="component" value="Chromosome 2"/>
</dbReference>
<dbReference type="ExpressionAtlas" id="O22870">
    <property type="expression patterns" value="baseline and differential"/>
</dbReference>
<dbReference type="GO" id="GO:0009507">
    <property type="term" value="C:chloroplast"/>
    <property type="evidence" value="ECO:0007005"/>
    <property type="project" value="TAIR"/>
</dbReference>
<dbReference type="GO" id="GO:0009570">
    <property type="term" value="C:chloroplast stroma"/>
    <property type="evidence" value="ECO:0007005"/>
    <property type="project" value="TAIR"/>
</dbReference>
<dbReference type="GO" id="GO:0009534">
    <property type="term" value="C:chloroplast thylakoid"/>
    <property type="evidence" value="ECO:0007005"/>
    <property type="project" value="TAIR"/>
</dbReference>
<dbReference type="GO" id="GO:0009543">
    <property type="term" value="C:chloroplast thylakoid lumen"/>
    <property type="evidence" value="ECO:0000314"/>
    <property type="project" value="UniProtKB"/>
</dbReference>
<dbReference type="GO" id="GO:0005829">
    <property type="term" value="C:cytosol"/>
    <property type="evidence" value="ECO:0007005"/>
    <property type="project" value="TAIR"/>
</dbReference>
<dbReference type="GO" id="GO:0009579">
    <property type="term" value="C:thylakoid"/>
    <property type="evidence" value="ECO:0007005"/>
    <property type="project" value="TAIR"/>
</dbReference>
<dbReference type="GO" id="GO:0031977">
    <property type="term" value="C:thylakoid lumen"/>
    <property type="evidence" value="ECO:0007005"/>
    <property type="project" value="TAIR"/>
</dbReference>
<dbReference type="GO" id="GO:0003755">
    <property type="term" value="F:peptidyl-prolyl cis-trans isomerase activity"/>
    <property type="evidence" value="ECO:0007669"/>
    <property type="project" value="UniProtKB-KW"/>
</dbReference>
<dbReference type="FunFam" id="3.10.50.40:FF:000038">
    <property type="entry name" value="Peptidylprolyl isomerase"/>
    <property type="match status" value="1"/>
</dbReference>
<dbReference type="Gene3D" id="3.10.50.40">
    <property type="match status" value="1"/>
</dbReference>
<dbReference type="InterPro" id="IPR046357">
    <property type="entry name" value="PPIase_dom_sf"/>
</dbReference>
<dbReference type="InterPro" id="IPR001179">
    <property type="entry name" value="PPIase_FKBP_dom"/>
</dbReference>
<dbReference type="PANTHER" id="PTHR43811">
    <property type="entry name" value="FKBP-TYPE PEPTIDYL-PROLYL CIS-TRANS ISOMERASE FKPA"/>
    <property type="match status" value="1"/>
</dbReference>
<dbReference type="PANTHER" id="PTHR43811:SF17">
    <property type="entry name" value="PEPTIDYL-PROLYL CIS-TRANS ISOMERASE FKBP16-3, CHLOROPLASTIC"/>
    <property type="match status" value="1"/>
</dbReference>
<dbReference type="Pfam" id="PF00254">
    <property type="entry name" value="FKBP_C"/>
    <property type="match status" value="1"/>
</dbReference>
<dbReference type="SUPFAM" id="SSF54534">
    <property type="entry name" value="FKBP-like"/>
    <property type="match status" value="1"/>
</dbReference>
<dbReference type="PROSITE" id="PS50059">
    <property type="entry name" value="FKBP_PPIASE"/>
    <property type="match status" value="1"/>
</dbReference>
<feature type="transit peptide" description="Chloroplast" evidence="2">
    <location>
        <begin position="1"/>
        <end position="36"/>
    </location>
</feature>
<feature type="transit peptide" description="Thylakoid" evidence="4">
    <location>
        <begin position="37"/>
        <end position="76"/>
    </location>
</feature>
<feature type="chain" id="PRO_0000025525" description="Peptidyl-prolyl cis-trans isomerase FKBP16-3, chloroplastic">
    <location>
        <begin position="77"/>
        <end position="223"/>
    </location>
</feature>
<feature type="domain" description="PPIase FKBP-type" evidence="3">
    <location>
        <begin position="124"/>
        <end position="216"/>
    </location>
</feature>
<reference key="1">
    <citation type="journal article" date="1999" name="Nature">
        <title>Sequence and analysis of chromosome 2 of the plant Arabidopsis thaliana.</title>
        <authorList>
            <person name="Lin X."/>
            <person name="Kaul S."/>
            <person name="Rounsley S.D."/>
            <person name="Shea T.P."/>
            <person name="Benito M.-I."/>
            <person name="Town C.D."/>
            <person name="Fujii C.Y."/>
            <person name="Mason T.M."/>
            <person name="Bowman C.L."/>
            <person name="Barnstead M.E."/>
            <person name="Feldblyum T.V."/>
            <person name="Buell C.R."/>
            <person name="Ketchum K.A."/>
            <person name="Lee J.J."/>
            <person name="Ronning C.M."/>
            <person name="Koo H.L."/>
            <person name="Moffat K.S."/>
            <person name="Cronin L.A."/>
            <person name="Shen M."/>
            <person name="Pai G."/>
            <person name="Van Aken S."/>
            <person name="Umayam L."/>
            <person name="Tallon L.J."/>
            <person name="Gill J.E."/>
            <person name="Adams M.D."/>
            <person name="Carrera A.J."/>
            <person name="Creasy T.H."/>
            <person name="Goodman H.M."/>
            <person name="Somerville C.R."/>
            <person name="Copenhaver G.P."/>
            <person name="Preuss D."/>
            <person name="Nierman W.C."/>
            <person name="White O."/>
            <person name="Eisen J.A."/>
            <person name="Salzberg S.L."/>
            <person name="Fraser C.M."/>
            <person name="Venter J.C."/>
        </authorList>
    </citation>
    <scope>NUCLEOTIDE SEQUENCE [LARGE SCALE GENOMIC DNA]</scope>
    <source>
        <strain>cv. Columbia</strain>
    </source>
</reference>
<reference key="2">
    <citation type="journal article" date="2017" name="Plant J.">
        <title>Araport11: a complete reannotation of the Arabidopsis thaliana reference genome.</title>
        <authorList>
            <person name="Cheng C.Y."/>
            <person name="Krishnakumar V."/>
            <person name="Chan A.P."/>
            <person name="Thibaud-Nissen F."/>
            <person name="Schobel S."/>
            <person name="Town C.D."/>
        </authorList>
    </citation>
    <scope>GENOME REANNOTATION</scope>
    <source>
        <strain>cv. Columbia</strain>
    </source>
</reference>
<reference key="3">
    <citation type="journal article" date="2003" name="Science">
        <title>Empirical analysis of transcriptional activity in the Arabidopsis genome.</title>
        <authorList>
            <person name="Yamada K."/>
            <person name="Lim J."/>
            <person name="Dale J.M."/>
            <person name="Chen H."/>
            <person name="Shinn P."/>
            <person name="Palm C.J."/>
            <person name="Southwick A.M."/>
            <person name="Wu H.C."/>
            <person name="Kim C.J."/>
            <person name="Nguyen M."/>
            <person name="Pham P.K."/>
            <person name="Cheuk R.F."/>
            <person name="Karlin-Newmann G."/>
            <person name="Liu S.X."/>
            <person name="Lam B."/>
            <person name="Sakano H."/>
            <person name="Wu T."/>
            <person name="Yu G."/>
            <person name="Miranda M."/>
            <person name="Quach H.L."/>
            <person name="Tripp M."/>
            <person name="Chang C.H."/>
            <person name="Lee J.M."/>
            <person name="Toriumi M.J."/>
            <person name="Chan M.M."/>
            <person name="Tang C.C."/>
            <person name="Onodera C.S."/>
            <person name="Deng J.M."/>
            <person name="Akiyama K."/>
            <person name="Ansari Y."/>
            <person name="Arakawa T."/>
            <person name="Banh J."/>
            <person name="Banno F."/>
            <person name="Bowser L."/>
            <person name="Brooks S.Y."/>
            <person name="Carninci P."/>
            <person name="Chao Q."/>
            <person name="Choy N."/>
            <person name="Enju A."/>
            <person name="Goldsmith A.D."/>
            <person name="Gurjal M."/>
            <person name="Hansen N.F."/>
            <person name="Hayashizaki Y."/>
            <person name="Johnson-Hopson C."/>
            <person name="Hsuan V.W."/>
            <person name="Iida K."/>
            <person name="Karnes M."/>
            <person name="Khan S."/>
            <person name="Koesema E."/>
            <person name="Ishida J."/>
            <person name="Jiang P.X."/>
            <person name="Jones T."/>
            <person name="Kawai J."/>
            <person name="Kamiya A."/>
            <person name="Meyers C."/>
            <person name="Nakajima M."/>
            <person name="Narusaka M."/>
            <person name="Seki M."/>
            <person name="Sakurai T."/>
            <person name="Satou M."/>
            <person name="Tamse R."/>
            <person name="Vaysberg M."/>
            <person name="Wallender E.K."/>
            <person name="Wong C."/>
            <person name="Yamamura Y."/>
            <person name="Yuan S."/>
            <person name="Shinozaki K."/>
            <person name="Davis R.W."/>
            <person name="Theologis A."/>
            <person name="Ecker J.R."/>
        </authorList>
    </citation>
    <scope>NUCLEOTIDE SEQUENCE [LARGE SCALE MRNA]</scope>
    <source>
        <strain>cv. Columbia</strain>
    </source>
</reference>
<reference key="4">
    <citation type="journal article" date="2002" name="J. Biol. Chem.">
        <title>Proteome map of the chloroplast lumen of Arabidopsis thaliana.</title>
        <authorList>
            <person name="Schubert M."/>
            <person name="Petersson U.A."/>
            <person name="Haas B.J."/>
            <person name="Funk C."/>
            <person name="Schroeder W.P."/>
            <person name="Kieselbach T."/>
        </authorList>
    </citation>
    <scope>PROTEIN SEQUENCE OF 77-96</scope>
    <scope>SUBCELLULAR LOCATION</scope>
</reference>
<reference key="5">
    <citation type="journal article" date="2002" name="Plant Cell">
        <title>Central functions of the lumenal and peripheral thylakoid proteome of Arabidopsis determined by experimentation and genome-wide prediction.</title>
        <authorList>
            <person name="Peltier J.-B."/>
            <person name="Emanuelsson O."/>
            <person name="Kalume D.E."/>
            <person name="Ytterberg J."/>
            <person name="Friso G."/>
            <person name="Rudella A."/>
            <person name="Liberles D.A."/>
            <person name="Soederberg L."/>
            <person name="Roepstorff P."/>
            <person name="von Heijne G."/>
            <person name="van Wijk K.J."/>
        </authorList>
    </citation>
    <scope>SUBCELLULAR LOCATION</scope>
    <scope>IDENTIFICATION BY MASS SPECTROMETRY</scope>
</reference>
<reference key="6">
    <citation type="journal article" date="2004" name="Plant Physiol.">
        <title>Immunophilins and parvulins. Superfamily of peptidyl prolyl isomerases in Arabidopsis.</title>
        <authorList>
            <person name="He Z."/>
            <person name="Li L."/>
            <person name="Luan S."/>
        </authorList>
    </citation>
    <scope>GENE FAMILY</scope>
    <scope>NOMENCLATURE</scope>
</reference>
<evidence type="ECO:0000250" key="1"/>
<evidence type="ECO:0000255" key="2"/>
<evidence type="ECO:0000255" key="3">
    <source>
        <dbReference type="PROSITE-ProRule" id="PRU00277"/>
    </source>
</evidence>
<evidence type="ECO:0000269" key="4">
    <source>
    </source>
</evidence>
<evidence type="ECO:0000269" key="5">
    <source>
    </source>
</evidence>
<evidence type="ECO:0000305" key="6"/>
<organism>
    <name type="scientific">Arabidopsis thaliana</name>
    <name type="common">Mouse-ear cress</name>
    <dbReference type="NCBI Taxonomy" id="3702"/>
    <lineage>
        <taxon>Eukaryota</taxon>
        <taxon>Viridiplantae</taxon>
        <taxon>Streptophyta</taxon>
        <taxon>Embryophyta</taxon>
        <taxon>Tracheophyta</taxon>
        <taxon>Spermatophyta</taxon>
        <taxon>Magnoliopsida</taxon>
        <taxon>eudicotyledons</taxon>
        <taxon>Gunneridae</taxon>
        <taxon>Pentapetalae</taxon>
        <taxon>rosids</taxon>
        <taxon>malvids</taxon>
        <taxon>Brassicales</taxon>
        <taxon>Brassicaceae</taxon>
        <taxon>Camelineae</taxon>
        <taxon>Arabidopsis</taxon>
    </lineage>
</organism>
<accession>O22870</accession>
<accession>Q940C0</accession>
<gene>
    <name type="primary">FKBP16-3</name>
    <name type="synonym">FKBP17</name>
    <name type="ordered locus">At2g43560</name>
    <name type="ORF">T1O24.30</name>
</gene>
<sequence length="223" mass="23564">MAASSPSLLLPLGSASRNGLTTKNPNSSRYIAARVIASETREQSCKISNLSSRREAMLLVLGVSGGLSMSSLAAYAAGLPPEDKPRLCEAECEKELENVPMVTTESGLQYKDIKVGRGPSPPVGFQVAANYVAMVPSGQIFDSSLEKGLPYLFRVGSGQVIKGLDEGILSMKAGGKRRLYIPGPLAFPKGLVSAPGRPRVAPNSPVIFDVSLEFIPGLDSEEE</sequence>
<proteinExistence type="evidence at protein level"/>
<keyword id="KW-0150">Chloroplast</keyword>
<keyword id="KW-0903">Direct protein sequencing</keyword>
<keyword id="KW-0413">Isomerase</keyword>
<keyword id="KW-0934">Plastid</keyword>
<keyword id="KW-1185">Reference proteome</keyword>
<keyword id="KW-0697">Rotamase</keyword>
<keyword id="KW-0793">Thylakoid</keyword>
<keyword id="KW-0809">Transit peptide</keyword>
<name>FK163_ARATH</name>